<dbReference type="EMBL" id="BC107555">
    <property type="protein sequence ID" value="AAI07556.1"/>
    <property type="molecule type" value="mRNA"/>
</dbReference>
<dbReference type="RefSeq" id="NP_001030440.1">
    <property type="nucleotide sequence ID" value="NM_001035363.1"/>
</dbReference>
<dbReference type="RefSeq" id="XP_015314213.1">
    <property type="nucleotide sequence ID" value="XM_015458727.1"/>
</dbReference>
<dbReference type="SMR" id="Q3B7L5"/>
<dbReference type="FunCoup" id="Q3B7L5">
    <property type="interactions" value="3038"/>
</dbReference>
<dbReference type="STRING" id="9913.ENSBTAP00000010532"/>
<dbReference type="PaxDb" id="9913-ENSBTAP00000010532"/>
<dbReference type="Ensembl" id="ENSBTAT00000010532.7">
    <property type="protein sequence ID" value="ENSBTAP00000010532.5"/>
    <property type="gene ID" value="ENSBTAG00000008010.7"/>
</dbReference>
<dbReference type="GeneID" id="526652"/>
<dbReference type="KEGG" id="bta:526652"/>
<dbReference type="CTD" id="201163"/>
<dbReference type="VEuPathDB" id="HostDB:ENSBTAG00000008010"/>
<dbReference type="VGNC" id="VGNC:101448">
    <property type="gene designation" value="FLCN"/>
</dbReference>
<dbReference type="eggNOG" id="KOG3715">
    <property type="taxonomic scope" value="Eukaryota"/>
</dbReference>
<dbReference type="GeneTree" id="ENSGT00390000009864"/>
<dbReference type="HOGENOM" id="CLU_035854_2_0_1"/>
<dbReference type="InParanoid" id="Q3B7L5"/>
<dbReference type="OMA" id="LWASLHC"/>
<dbReference type="OrthoDB" id="5599713at2759"/>
<dbReference type="TreeFam" id="TF315084"/>
<dbReference type="Reactome" id="R-BTA-9639288">
    <property type="pathway name" value="Amino acids regulate mTORC1"/>
</dbReference>
<dbReference type="Proteomes" id="UP000009136">
    <property type="component" value="Chromosome 19"/>
</dbReference>
<dbReference type="Bgee" id="ENSBTAG00000008010">
    <property type="expression patterns" value="Expressed in retina and 103 other cell types or tissues"/>
</dbReference>
<dbReference type="GO" id="GO:0044291">
    <property type="term" value="C:cell-cell contact zone"/>
    <property type="evidence" value="ECO:0007669"/>
    <property type="project" value="Ensembl"/>
</dbReference>
<dbReference type="GO" id="GO:0005813">
    <property type="term" value="C:centrosome"/>
    <property type="evidence" value="ECO:0000250"/>
    <property type="project" value="UniProtKB"/>
</dbReference>
<dbReference type="GO" id="GO:0005929">
    <property type="term" value="C:cilium"/>
    <property type="evidence" value="ECO:0000250"/>
    <property type="project" value="UniProtKB"/>
</dbReference>
<dbReference type="GO" id="GO:0005737">
    <property type="term" value="C:cytoplasm"/>
    <property type="evidence" value="ECO:0000250"/>
    <property type="project" value="UniProtKB"/>
</dbReference>
<dbReference type="GO" id="GO:0005829">
    <property type="term" value="C:cytosol"/>
    <property type="evidence" value="ECO:0000250"/>
    <property type="project" value="UniProtKB"/>
</dbReference>
<dbReference type="GO" id="GO:1990877">
    <property type="term" value="C:FNIP-folliculin RagC/D GAP"/>
    <property type="evidence" value="ECO:0000250"/>
    <property type="project" value="UniProtKB"/>
</dbReference>
<dbReference type="GO" id="GO:0005765">
    <property type="term" value="C:lysosomal membrane"/>
    <property type="evidence" value="ECO:0000250"/>
    <property type="project" value="UniProtKB"/>
</dbReference>
<dbReference type="GO" id="GO:0030496">
    <property type="term" value="C:midbody"/>
    <property type="evidence" value="ECO:0007669"/>
    <property type="project" value="Ensembl"/>
</dbReference>
<dbReference type="GO" id="GO:0072686">
    <property type="term" value="C:mitotic spindle"/>
    <property type="evidence" value="ECO:0000250"/>
    <property type="project" value="UniProtKB"/>
</dbReference>
<dbReference type="GO" id="GO:0005634">
    <property type="term" value="C:nucleus"/>
    <property type="evidence" value="ECO:0000250"/>
    <property type="project" value="UniProtKB"/>
</dbReference>
<dbReference type="GO" id="GO:0005886">
    <property type="term" value="C:plasma membrane"/>
    <property type="evidence" value="ECO:0000250"/>
    <property type="project" value="UniProtKB"/>
</dbReference>
<dbReference type="GO" id="GO:0019899">
    <property type="term" value="F:enzyme binding"/>
    <property type="evidence" value="ECO:0007669"/>
    <property type="project" value="Ensembl"/>
</dbReference>
<dbReference type="GO" id="GO:0004857">
    <property type="term" value="F:enzyme inhibitor activity"/>
    <property type="evidence" value="ECO:0007669"/>
    <property type="project" value="Ensembl"/>
</dbReference>
<dbReference type="GO" id="GO:0005096">
    <property type="term" value="F:GTPase activator activity"/>
    <property type="evidence" value="ECO:0000250"/>
    <property type="project" value="UniProtKB"/>
</dbReference>
<dbReference type="GO" id="GO:0044877">
    <property type="term" value="F:protein-containing complex binding"/>
    <property type="evidence" value="ECO:0000250"/>
    <property type="project" value="UniProtKB"/>
</dbReference>
<dbReference type="GO" id="GO:0072111">
    <property type="term" value="P:cell proliferation involved in kidney development"/>
    <property type="evidence" value="ECO:0007669"/>
    <property type="project" value="Ensembl"/>
</dbReference>
<dbReference type="GO" id="GO:0007043">
    <property type="term" value="P:cell-cell junction assembly"/>
    <property type="evidence" value="ECO:0000250"/>
    <property type="project" value="UniProtKB"/>
</dbReference>
<dbReference type="GO" id="GO:0034198">
    <property type="term" value="P:cellular response to amino acid starvation"/>
    <property type="evidence" value="ECO:0000250"/>
    <property type="project" value="UniProtKB"/>
</dbReference>
<dbReference type="GO" id="GO:0009267">
    <property type="term" value="P:cellular response to starvation"/>
    <property type="evidence" value="ECO:0000250"/>
    <property type="project" value="UniProtKB"/>
</dbReference>
<dbReference type="GO" id="GO:0097009">
    <property type="term" value="P:energy homeostasis"/>
    <property type="evidence" value="ECO:0000250"/>
    <property type="project" value="UniProtKB"/>
</dbReference>
<dbReference type="GO" id="GO:0050673">
    <property type="term" value="P:epithelial cell proliferation"/>
    <property type="evidence" value="ECO:0007669"/>
    <property type="project" value="Ensembl"/>
</dbReference>
<dbReference type="GO" id="GO:0070371">
    <property type="term" value="P:ERK1 and ERK2 cascade"/>
    <property type="evidence" value="ECO:0007669"/>
    <property type="project" value="Ensembl"/>
</dbReference>
<dbReference type="GO" id="GO:0030097">
    <property type="term" value="P:hemopoiesis"/>
    <property type="evidence" value="ECO:0000250"/>
    <property type="project" value="UniProtKB"/>
</dbReference>
<dbReference type="GO" id="GO:0001701">
    <property type="term" value="P:in utero embryonic development"/>
    <property type="evidence" value="ECO:0000250"/>
    <property type="project" value="UniProtKB"/>
</dbReference>
<dbReference type="GO" id="GO:0035556">
    <property type="term" value="P:intracellular signal transduction"/>
    <property type="evidence" value="ECO:0000250"/>
    <property type="project" value="UniProtKB"/>
</dbReference>
<dbReference type="GO" id="GO:0097193">
    <property type="term" value="P:intrinsic apoptotic signaling pathway"/>
    <property type="evidence" value="ECO:0007669"/>
    <property type="project" value="Ensembl"/>
</dbReference>
<dbReference type="GO" id="GO:0032418">
    <property type="term" value="P:lysosome localization"/>
    <property type="evidence" value="ECO:0000250"/>
    <property type="project" value="UniProtKB"/>
</dbReference>
<dbReference type="GO" id="GO:1903444">
    <property type="term" value="P:negative regulation of brown fat cell differentiation"/>
    <property type="evidence" value="ECO:0000250"/>
    <property type="project" value="UniProtKB"/>
</dbReference>
<dbReference type="GO" id="GO:1901723">
    <property type="term" value="P:negative regulation of cell proliferation involved in kidney development"/>
    <property type="evidence" value="ECO:0000250"/>
    <property type="project" value="UniProtKB"/>
</dbReference>
<dbReference type="GO" id="GO:0120163">
    <property type="term" value="P:negative regulation of cold-induced thermogenesis"/>
    <property type="evidence" value="ECO:0007669"/>
    <property type="project" value="Ensembl"/>
</dbReference>
<dbReference type="GO" id="GO:0050680">
    <property type="term" value="P:negative regulation of epithelial cell proliferation"/>
    <property type="evidence" value="ECO:0007669"/>
    <property type="project" value="Ensembl"/>
</dbReference>
<dbReference type="GO" id="GO:0070373">
    <property type="term" value="P:negative regulation of ERK1 and ERK2 cascade"/>
    <property type="evidence" value="ECO:0000250"/>
    <property type="project" value="UniProtKB"/>
</dbReference>
<dbReference type="GO" id="GO:0045820">
    <property type="term" value="P:negative regulation of glycolytic process"/>
    <property type="evidence" value="ECO:0007669"/>
    <property type="project" value="Ensembl"/>
</dbReference>
<dbReference type="GO" id="GO:1905672">
    <property type="term" value="P:negative regulation of lysosome organization"/>
    <property type="evidence" value="ECO:0007669"/>
    <property type="project" value="Ensembl"/>
</dbReference>
<dbReference type="GO" id="GO:0051898">
    <property type="term" value="P:negative regulation of phosphatidylinositol 3-kinase/protein kinase B signal transduction"/>
    <property type="evidence" value="ECO:0000250"/>
    <property type="project" value="UniProtKB"/>
</dbReference>
<dbReference type="GO" id="GO:1901874">
    <property type="term" value="P:negative regulation of post-translational protein modification"/>
    <property type="evidence" value="ECO:0007669"/>
    <property type="project" value="Ensembl"/>
</dbReference>
<dbReference type="GO" id="GO:0035024">
    <property type="term" value="P:negative regulation of Rho protein signal transduction"/>
    <property type="evidence" value="ECO:0000250"/>
    <property type="project" value="UniProtKB"/>
</dbReference>
<dbReference type="GO" id="GO:0032007">
    <property type="term" value="P:negative regulation of TOR signaling"/>
    <property type="evidence" value="ECO:0000250"/>
    <property type="project" value="UniProtKB"/>
</dbReference>
<dbReference type="GO" id="GO:0000122">
    <property type="term" value="P:negative regulation of transcription by RNA polymerase II"/>
    <property type="evidence" value="ECO:0000250"/>
    <property type="project" value="UniProtKB"/>
</dbReference>
<dbReference type="GO" id="GO:0043491">
    <property type="term" value="P:phosphatidylinositol 3-kinase/protein kinase B signal transduction"/>
    <property type="evidence" value="ECO:0007669"/>
    <property type="project" value="Ensembl"/>
</dbReference>
<dbReference type="GO" id="GO:0043065">
    <property type="term" value="P:positive regulation of apoptotic process"/>
    <property type="evidence" value="ECO:0000250"/>
    <property type="project" value="UniProtKB"/>
</dbReference>
<dbReference type="GO" id="GO:0010508">
    <property type="term" value="P:positive regulation of autophagy"/>
    <property type="evidence" value="ECO:0000250"/>
    <property type="project" value="UniProtKB"/>
</dbReference>
<dbReference type="GO" id="GO:2001244">
    <property type="term" value="P:positive regulation of intrinsic apoptotic signaling pathway"/>
    <property type="evidence" value="ECO:0007669"/>
    <property type="project" value="Ensembl"/>
</dbReference>
<dbReference type="GO" id="GO:0032008">
    <property type="term" value="P:positive regulation of TOR signaling"/>
    <property type="evidence" value="ECO:0000250"/>
    <property type="project" value="UniProtKB"/>
</dbReference>
<dbReference type="GO" id="GO:1904263">
    <property type="term" value="P:positive regulation of TORC1 signaling"/>
    <property type="evidence" value="ECO:0000250"/>
    <property type="project" value="UniProtKB"/>
</dbReference>
<dbReference type="GO" id="GO:0030511">
    <property type="term" value="P:positive regulation of transforming growth factor beta receptor signaling pathway"/>
    <property type="evidence" value="ECO:0000250"/>
    <property type="project" value="UniProtKB"/>
</dbReference>
<dbReference type="GO" id="GO:2000973">
    <property type="term" value="P:regulation of pro-B cell differentiation"/>
    <property type="evidence" value="ECO:0000250"/>
    <property type="project" value="UniProtKB"/>
</dbReference>
<dbReference type="GO" id="GO:0046578">
    <property type="term" value="P:regulation of Ras protein signal transduction"/>
    <property type="evidence" value="ECO:0000250"/>
    <property type="project" value="UniProtKB"/>
</dbReference>
<dbReference type="GO" id="GO:0032006">
    <property type="term" value="P:regulation of TOR signaling"/>
    <property type="evidence" value="ECO:0000250"/>
    <property type="project" value="UniProtKB"/>
</dbReference>
<dbReference type="GO" id="GO:0031929">
    <property type="term" value="P:TOR signaling"/>
    <property type="evidence" value="ECO:0007669"/>
    <property type="project" value="Ensembl"/>
</dbReference>
<dbReference type="GO" id="GO:0007179">
    <property type="term" value="P:transforming growth factor beta receptor signaling pathway"/>
    <property type="evidence" value="ECO:0007669"/>
    <property type="project" value="Ensembl"/>
</dbReference>
<dbReference type="FunFam" id="1.10.10.1730:FF:000001">
    <property type="entry name" value="Folliculin"/>
    <property type="match status" value="1"/>
</dbReference>
<dbReference type="FunFam" id="3.40.50.12430:FF:000001">
    <property type="entry name" value="Folliculin"/>
    <property type="match status" value="1"/>
</dbReference>
<dbReference type="Gene3D" id="3.40.50.12430">
    <property type="match status" value="1"/>
</dbReference>
<dbReference type="Gene3D" id="1.10.10.1730">
    <property type="entry name" value="Folliculin"/>
    <property type="match status" value="1"/>
</dbReference>
<dbReference type="InterPro" id="IPR037521">
    <property type="entry name" value="FLCN/SMCR8_DENN"/>
</dbReference>
<dbReference type="InterPro" id="IPR044886">
    <property type="entry name" value="FLCN_DENN_C_sf"/>
</dbReference>
<dbReference type="InterPro" id="IPR021713">
    <property type="entry name" value="Folliculin"/>
</dbReference>
<dbReference type="InterPro" id="IPR037520">
    <property type="entry name" value="Folliculin/SMCR8_longin"/>
</dbReference>
<dbReference type="InterPro" id="IPR032035">
    <property type="entry name" value="Folliculin_DENN"/>
</dbReference>
<dbReference type="PANTHER" id="PTHR31441:SF2">
    <property type="entry name" value="FOLLICULIN"/>
    <property type="match status" value="1"/>
</dbReference>
<dbReference type="PANTHER" id="PTHR31441">
    <property type="entry name" value="FOLLICULIN FAMILY MEMBER"/>
    <property type="match status" value="1"/>
</dbReference>
<dbReference type="Pfam" id="PF11704">
    <property type="entry name" value="Folliculin"/>
    <property type="match status" value="1"/>
</dbReference>
<dbReference type="Pfam" id="PF16692">
    <property type="entry name" value="Folliculin_C"/>
    <property type="match status" value="1"/>
</dbReference>
<dbReference type="PROSITE" id="PS51834">
    <property type="entry name" value="DENN_FLCN_SMCR8"/>
    <property type="match status" value="1"/>
</dbReference>
<organism>
    <name type="scientific">Bos taurus</name>
    <name type="common">Bovine</name>
    <dbReference type="NCBI Taxonomy" id="9913"/>
    <lineage>
        <taxon>Eukaryota</taxon>
        <taxon>Metazoa</taxon>
        <taxon>Chordata</taxon>
        <taxon>Craniata</taxon>
        <taxon>Vertebrata</taxon>
        <taxon>Euteleostomi</taxon>
        <taxon>Mammalia</taxon>
        <taxon>Eutheria</taxon>
        <taxon>Laurasiatheria</taxon>
        <taxon>Artiodactyla</taxon>
        <taxon>Ruminantia</taxon>
        <taxon>Pecora</taxon>
        <taxon>Bovidae</taxon>
        <taxon>Bovinae</taxon>
        <taxon>Bos</taxon>
    </lineage>
</organism>
<proteinExistence type="evidence at transcript level"/>
<keyword id="KW-0966">Cell projection</keyword>
<keyword id="KW-0175">Coiled coil</keyword>
<keyword id="KW-0963">Cytoplasm</keyword>
<keyword id="KW-0206">Cytoskeleton</keyword>
<keyword id="KW-0343">GTPase activation</keyword>
<keyword id="KW-0458">Lysosome</keyword>
<keyword id="KW-0472">Membrane</keyword>
<keyword id="KW-0539">Nucleus</keyword>
<keyword id="KW-0597">Phosphoprotein</keyword>
<keyword id="KW-1185">Reference proteome</keyword>
<keyword id="KW-0043">Tumor suppressor</keyword>
<gene>
    <name evidence="1" type="primary">FLCN</name>
</gene>
<protein>
    <recommendedName>
        <fullName evidence="1">Folliculin</fullName>
    </recommendedName>
</protein>
<evidence type="ECO:0000250" key="1">
    <source>
        <dbReference type="UniProtKB" id="Q8NFG4"/>
    </source>
</evidence>
<evidence type="ECO:0000250" key="2">
    <source>
        <dbReference type="UniProtKB" id="Q8QZS3"/>
    </source>
</evidence>
<evidence type="ECO:0000255" key="3"/>
<evidence type="ECO:0000255" key="4">
    <source>
        <dbReference type="PROSITE-ProRule" id="PRU01178"/>
    </source>
</evidence>
<evidence type="ECO:0000256" key="5">
    <source>
        <dbReference type="SAM" id="MobiDB-lite"/>
    </source>
</evidence>
<evidence type="ECO:0000305" key="6"/>
<sequence>MNAIVALCHFCELHGPRTLFCTEVLHAPLPQGAGSGDGAGRGEPADEEEGGIQMSSRIRAHSPAEGASAESSSPGPKKSDMCEGCRSLAAGHPGYISHDKETSIKYVSHQHPNHPQLFSIVRQACVRSLSCEVCPGREGPIFFGDEQHGFVFSHTFFIKDSLARGFQRWYSIIAIMMDRIYLINSWPFLLGKIRGIIDELQGKALKVFEAEQFGCPQRAQRMNTAFTPFLHQRNGNAARSLTSLTNDDSLWACLHTSFAWLLKACGSRLTEKLLEGAPTEDTLVQMEQLAELEEESESWDNSEAEEEEKGPALPEGAEGRELTKCPAESSLLSDCGAWQPRKLSVFKSLRHMRQVLGAPSFRTLAWHVLMGNQVIWKSRDSDLVHSAFEVLRTMLPVGCVRVIPYSSQYEEAYRCNFLGLSPHVQIPPHVLASEFAVVVEVHTATRSSLHAVGCESEQPLSKYEFVVTSGSPVAADRVGPTILNKMEAALTNQNLSVDVVDQCLVCLKEEWMNKVKVLFKFTKVDSRPKEDTQKLLSILGASEEDNVKLLKFWMTGLSKTYKSHLMSTVRSPTALEPRN</sequence>
<comment type="function">
    <text evidence="1 2">Multi-functional protein, involved in both the cellular response to amino acid availability and in the regulation of glycolysis (By similarity). GTPase-activating protein that plays a key role in the cellular response to amino acid availability through regulation of the non-canonical mTORC1 signaling cascade controlling the MiT/TFE factors TFEB and TFE3 (By similarity). Activates mTORC1 by acting as a GTPase-activating protein: specifically stimulates GTP hydrolysis by RagC/RRAGC or RagD/RRAGD, promoting the conversion to the GDP-bound state of RagC/RRAGC or RagD/RRAGD, and thereby activating the kinase activity of mTORC1 (By similarity). The GTPase-activating activity is inhibited during starvation and activated in presence of nutrients (By similarity). Acts as a key component for non-canonical mTORC1-dependent control of the MiT/TFE factors TFEB and TFE3, while it is not involved in mTORC1-dependent phosphorylation of canonical RPS6KB1/S6K1 and EIF4EBP1/4E-BP1 (By similarity). In low-amino acid conditions, the lysosomal folliculin complex (LFC) is formed on the membrane of lysosomes, which inhibits the GTPase-activating activity of FLCN, inactivates mTORC1 and maximizes nuclear translocation of TFEB and TFE3 (By similarity). Upon amino acid restimulation, RagA/RRAGA (or RagB/RRAGB) nucleotide exchange promotes disassembly of the LFC complex and liberates the GTPase-activating activity of FLCN, leading to activation of mTORC1 and subsequent cytoplasmic retention of TFEB and TFE3 (By similarity). Indirectly acts as a positive regulator of Wnt signaling by promoting mTOR-dependent cytoplasmic retention of MiT/TFE factor TFE3 (By similarity). Required for the exit of hematopoietic stem cell from pluripotency by promoting mTOR-dependent cytoplasmic retention of TFE3, thereby increasing Wnt signaling (By similarity). Involved in the control of embryonic stem cells differentiation; together with LAMTOR1 it is necessary to recruit and activate RagC/RRAGC and RagD/RRAGD at the lysosomes, and to induce exit of embryonic stem cells from pluripotency via non-canonical, mTOR-independent TFE3 inactivation (By similarity). Acts as an inhibitor of browning of adipose tissue by regulating mTOR-dependent cytoplasmic retention of TFE3 (By similarity). In response to flow stress, regulates STK11/LKB1 accumulation and mTORC1 activation through primary cilia: may act by recruiting STK11/LKB1 to primary cilia for activation of AMPK resided at basal bodies, causing mTORC1 down-regulation (By similarity). Together with FNIP1 and/or FNIP2, regulates autophagy: following phosphorylation by ULK1, interacts with GABARAP and promotes autophagy (By similarity). Required for starvation-induced perinuclear clustering of lysosomes by promoting association of RILP with its effector RAB34 (By similarity). Regulates glycolysis by binding to lactate dehydrogenase LDHA, acting as an uncompetitive inhibitor (By similarity).</text>
</comment>
<comment type="activity regulation">
    <text evidence="1">GTPase-activating activity is inhibited in the folliculin complex (LFC), which stabilizes the GDP-bound state of RagA/RRAGA (or RagB/RRAGB), because Arg-164 is located far from the RagC/RRAGC or RagD/RRAGD nucleotide pocket. Disassembly of the LFC complex upon amino acid restimulation liberates the GTPase-activating activity.</text>
</comment>
<comment type="subunit">
    <text evidence="1">Interacts (via C-terminus) with FNIP1 or FNIP2 (via C-terminus). Component of the lysosomal folliculin complex (LFC), composed of FLCN, FNIP1 (or FNIP2), RagA/RRAGA or RagB/RRAGB GDP-bound, RagC/RRAGC or RagD/RRAGD GTP-bound, and Ragulator. Interaction with FNIP1 or FNIP2 mediates indirect interaction with the PRKAA1, PRKAB1 and PRKAG1 subunits of 5'-AMP-activated protein kinase (AMPK). Interacts with HSP90AA1 in the presence of FNIP1. Interacts with HSP70, STUB1, CDC37, AHSA1, CCT2, STIP1, PTGES3 and PPP5C (By similarity). Interacts with GABARAP; interaction takes place in the presence of FNIP1 and/or FNIP2 (By similarity). Interacts with RILP; the interaction is direct and promotes association between RILP and RAB34 (By similarity). Interacts with KIF3A and KIF3B (By similarity). Interacts with lactate dehydrogenase LDHA, but not LDHB; the interaction is direct, may preferentially bind LDHA dimers rather than tetramers, and regulates LDHA activity, acting as an uncompetitive inhibitor.</text>
</comment>
<comment type="subcellular location">
    <subcellularLocation>
        <location evidence="1">Lysosome membrane</location>
    </subcellularLocation>
    <subcellularLocation>
        <location evidence="1">Cytoplasm</location>
        <location evidence="1">Cytosol</location>
    </subcellularLocation>
    <subcellularLocation>
        <location evidence="1">Cell projection</location>
        <location evidence="1">Cilium</location>
    </subcellularLocation>
    <subcellularLocation>
        <location evidence="1">Cytoplasm</location>
        <location evidence="1">Cytoskeleton</location>
        <location evidence="1">Microtubule organizing center</location>
        <location evidence="1">Centrosome</location>
    </subcellularLocation>
    <subcellularLocation>
        <location evidence="1">Cytoplasm</location>
        <location evidence="1">Cytoskeleton</location>
        <location evidence="1">Spindle</location>
    </subcellularLocation>
    <subcellularLocation>
        <location evidence="1">Nucleus</location>
    </subcellularLocation>
    <text evidence="1">Localizes to lysosome membrane in amino acid-depleted conditions and relocalizes to the cytosol upon refeeding. Colocalizes with FNIP1 and FNIP2 in the cytoplasm. Also localizes to motile and non-motile cilia, centrosomes and the mitotic spindle.</text>
</comment>
<comment type="PTM">
    <text evidence="1">Phosphorylation by ULK1 modulates the interaction with GABARAP and is required to regulate autophagy.</text>
</comment>
<comment type="similarity">
    <text evidence="6">Belongs to the folliculin family.</text>
</comment>
<reference key="1">
    <citation type="submission" date="2005-10" db="EMBL/GenBank/DDBJ databases">
        <authorList>
            <consortium name="NIH - Mammalian Gene Collection (MGC) project"/>
        </authorList>
    </citation>
    <scope>NUCLEOTIDE SEQUENCE [LARGE SCALE MRNA]</scope>
    <source>
        <strain>Hereford</strain>
        <tissue>Uterus</tissue>
    </source>
</reference>
<feature type="chain" id="PRO_0000223939" description="Folliculin">
    <location>
        <begin position="1"/>
        <end position="579"/>
    </location>
</feature>
<feature type="domain" description="uDENN FLCN/SMCR8-type" evidence="4">
    <location>
        <begin position="86"/>
        <end position="242"/>
    </location>
</feature>
<feature type="domain" description="cDENN FLCN/SMCR8-type" evidence="4">
    <location>
        <begin position="339"/>
        <end position="491"/>
    </location>
</feature>
<feature type="domain" description="dDENN FLCN/SMCR8-type" evidence="4">
    <location>
        <begin position="493"/>
        <end position="558"/>
    </location>
</feature>
<feature type="region of interest" description="Disordered" evidence="5">
    <location>
        <begin position="32"/>
        <end position="82"/>
    </location>
</feature>
<feature type="region of interest" description="Disordered" evidence="5">
    <location>
        <begin position="294"/>
        <end position="321"/>
    </location>
</feature>
<feature type="coiled-coil region" evidence="3">
    <location>
        <begin position="285"/>
        <end position="309"/>
    </location>
</feature>
<feature type="compositionally biased region" description="Low complexity" evidence="5">
    <location>
        <begin position="63"/>
        <end position="76"/>
    </location>
</feature>
<feature type="compositionally biased region" description="Acidic residues" evidence="5">
    <location>
        <begin position="294"/>
        <end position="308"/>
    </location>
</feature>
<feature type="site" description="Essential for GTPase activation (GAP) activity" evidence="1">
    <location>
        <position position="164"/>
    </location>
</feature>
<feature type="modified residue" description="Phosphoserine" evidence="1">
    <location>
        <position position="62"/>
    </location>
</feature>
<feature type="modified residue" description="Phosphoserine" evidence="1">
    <location>
        <position position="73"/>
    </location>
</feature>
<feature type="modified residue" description="Phosphoserine" evidence="1">
    <location>
        <position position="302"/>
    </location>
</feature>
<feature type="modified residue" description="Phosphoserine" evidence="1">
    <location>
        <position position="406"/>
    </location>
</feature>
<feature type="modified residue" description="Phosphoserine" evidence="1">
    <location>
        <position position="537"/>
    </location>
</feature>
<feature type="modified residue" description="Phosphoserine" evidence="1">
    <location>
        <position position="542"/>
    </location>
</feature>
<feature type="modified residue" description="Phosphoserine" evidence="1">
    <location>
        <position position="571"/>
    </location>
</feature>
<name>FLCN_BOVIN</name>
<accession>Q3B7L5</accession>